<proteinExistence type="inferred from homology"/>
<gene>
    <name evidence="1" type="primary">glmM</name>
    <name type="ordered locus">PSHAa0872</name>
</gene>
<feature type="chain" id="PRO_0000147937" description="Phosphoglucosamine mutase">
    <location>
        <begin position="1"/>
        <end position="449"/>
    </location>
</feature>
<feature type="active site" description="Phosphoserine intermediate" evidence="1">
    <location>
        <position position="102"/>
    </location>
</feature>
<feature type="binding site" description="via phosphate group" evidence="1">
    <location>
        <position position="102"/>
    </location>
    <ligand>
        <name>Mg(2+)</name>
        <dbReference type="ChEBI" id="CHEBI:18420"/>
    </ligand>
</feature>
<feature type="binding site" evidence="1">
    <location>
        <position position="241"/>
    </location>
    <ligand>
        <name>Mg(2+)</name>
        <dbReference type="ChEBI" id="CHEBI:18420"/>
    </ligand>
</feature>
<feature type="binding site" evidence="1">
    <location>
        <position position="243"/>
    </location>
    <ligand>
        <name>Mg(2+)</name>
        <dbReference type="ChEBI" id="CHEBI:18420"/>
    </ligand>
</feature>
<feature type="binding site" evidence="1">
    <location>
        <position position="245"/>
    </location>
    <ligand>
        <name>Mg(2+)</name>
        <dbReference type="ChEBI" id="CHEBI:18420"/>
    </ligand>
</feature>
<feature type="modified residue" description="Phosphoserine" evidence="1">
    <location>
        <position position="102"/>
    </location>
</feature>
<comment type="function">
    <text evidence="1">Catalyzes the conversion of glucosamine-6-phosphate to glucosamine-1-phosphate.</text>
</comment>
<comment type="catalytic activity">
    <reaction evidence="1">
        <text>alpha-D-glucosamine 1-phosphate = D-glucosamine 6-phosphate</text>
        <dbReference type="Rhea" id="RHEA:23424"/>
        <dbReference type="ChEBI" id="CHEBI:58516"/>
        <dbReference type="ChEBI" id="CHEBI:58725"/>
        <dbReference type="EC" id="5.4.2.10"/>
    </reaction>
</comment>
<comment type="cofactor">
    <cofactor evidence="1">
        <name>Mg(2+)</name>
        <dbReference type="ChEBI" id="CHEBI:18420"/>
    </cofactor>
    <text evidence="1">Binds 1 Mg(2+) ion per subunit.</text>
</comment>
<comment type="PTM">
    <text evidence="1">Activated by phosphorylation.</text>
</comment>
<comment type="similarity">
    <text evidence="1">Belongs to the phosphohexose mutase family.</text>
</comment>
<name>GLMM_PSET1</name>
<protein>
    <recommendedName>
        <fullName evidence="1">Phosphoglucosamine mutase</fullName>
        <ecNumber evidence="1">5.4.2.10</ecNumber>
    </recommendedName>
</protein>
<accession>Q3IE61</accession>
<evidence type="ECO:0000255" key="1">
    <source>
        <dbReference type="HAMAP-Rule" id="MF_01554"/>
    </source>
</evidence>
<dbReference type="EC" id="5.4.2.10" evidence="1"/>
<dbReference type="EMBL" id="CR954246">
    <property type="protein sequence ID" value="CAI85953.1"/>
    <property type="molecule type" value="Genomic_DNA"/>
</dbReference>
<dbReference type="SMR" id="Q3IE61"/>
<dbReference type="STRING" id="326442.PSHAa0872"/>
<dbReference type="KEGG" id="pha:PSHAa0872"/>
<dbReference type="eggNOG" id="COG1109">
    <property type="taxonomic scope" value="Bacteria"/>
</dbReference>
<dbReference type="HOGENOM" id="CLU_016950_7_0_6"/>
<dbReference type="BioCyc" id="PHAL326442:PSHA_RS04255-MONOMER"/>
<dbReference type="Proteomes" id="UP000006843">
    <property type="component" value="Chromosome I"/>
</dbReference>
<dbReference type="GO" id="GO:0005829">
    <property type="term" value="C:cytosol"/>
    <property type="evidence" value="ECO:0007669"/>
    <property type="project" value="TreeGrafter"/>
</dbReference>
<dbReference type="GO" id="GO:0000287">
    <property type="term" value="F:magnesium ion binding"/>
    <property type="evidence" value="ECO:0007669"/>
    <property type="project" value="UniProtKB-UniRule"/>
</dbReference>
<dbReference type="GO" id="GO:0008966">
    <property type="term" value="F:phosphoglucosamine mutase activity"/>
    <property type="evidence" value="ECO:0007669"/>
    <property type="project" value="UniProtKB-UniRule"/>
</dbReference>
<dbReference type="GO" id="GO:0004615">
    <property type="term" value="F:phosphomannomutase activity"/>
    <property type="evidence" value="ECO:0007669"/>
    <property type="project" value="TreeGrafter"/>
</dbReference>
<dbReference type="GO" id="GO:0005975">
    <property type="term" value="P:carbohydrate metabolic process"/>
    <property type="evidence" value="ECO:0007669"/>
    <property type="project" value="InterPro"/>
</dbReference>
<dbReference type="GO" id="GO:0009252">
    <property type="term" value="P:peptidoglycan biosynthetic process"/>
    <property type="evidence" value="ECO:0007669"/>
    <property type="project" value="TreeGrafter"/>
</dbReference>
<dbReference type="GO" id="GO:0006048">
    <property type="term" value="P:UDP-N-acetylglucosamine biosynthetic process"/>
    <property type="evidence" value="ECO:0007669"/>
    <property type="project" value="TreeGrafter"/>
</dbReference>
<dbReference type="CDD" id="cd05802">
    <property type="entry name" value="GlmM"/>
    <property type="match status" value="1"/>
</dbReference>
<dbReference type="FunFam" id="3.30.310.50:FF:000001">
    <property type="entry name" value="Phosphoglucosamine mutase"/>
    <property type="match status" value="1"/>
</dbReference>
<dbReference type="FunFam" id="3.40.120.10:FF:000001">
    <property type="entry name" value="Phosphoglucosamine mutase"/>
    <property type="match status" value="1"/>
</dbReference>
<dbReference type="FunFam" id="3.40.120.10:FF:000003">
    <property type="entry name" value="Phosphoglucosamine mutase"/>
    <property type="match status" value="1"/>
</dbReference>
<dbReference type="Gene3D" id="3.40.120.10">
    <property type="entry name" value="Alpha-D-Glucose-1,6-Bisphosphate, subunit A, domain 3"/>
    <property type="match status" value="3"/>
</dbReference>
<dbReference type="Gene3D" id="3.30.310.50">
    <property type="entry name" value="Alpha-D-phosphohexomutase, C-terminal domain"/>
    <property type="match status" value="1"/>
</dbReference>
<dbReference type="HAMAP" id="MF_01554_B">
    <property type="entry name" value="GlmM_B"/>
    <property type="match status" value="1"/>
</dbReference>
<dbReference type="InterPro" id="IPR005844">
    <property type="entry name" value="A-D-PHexomutase_a/b/a-I"/>
</dbReference>
<dbReference type="InterPro" id="IPR016055">
    <property type="entry name" value="A-D-PHexomutase_a/b/a-I/II/III"/>
</dbReference>
<dbReference type="InterPro" id="IPR005845">
    <property type="entry name" value="A-D-PHexomutase_a/b/a-II"/>
</dbReference>
<dbReference type="InterPro" id="IPR005846">
    <property type="entry name" value="A-D-PHexomutase_a/b/a-III"/>
</dbReference>
<dbReference type="InterPro" id="IPR005843">
    <property type="entry name" value="A-D-PHexomutase_C"/>
</dbReference>
<dbReference type="InterPro" id="IPR036900">
    <property type="entry name" value="A-D-PHexomutase_C_sf"/>
</dbReference>
<dbReference type="InterPro" id="IPR016066">
    <property type="entry name" value="A-D-PHexomutase_CS"/>
</dbReference>
<dbReference type="InterPro" id="IPR005841">
    <property type="entry name" value="Alpha-D-phosphohexomutase_SF"/>
</dbReference>
<dbReference type="InterPro" id="IPR006352">
    <property type="entry name" value="GlmM_bact"/>
</dbReference>
<dbReference type="InterPro" id="IPR050060">
    <property type="entry name" value="Phosphoglucosamine_mutase"/>
</dbReference>
<dbReference type="NCBIfam" id="TIGR01455">
    <property type="entry name" value="glmM"/>
    <property type="match status" value="1"/>
</dbReference>
<dbReference type="NCBIfam" id="NF008139">
    <property type="entry name" value="PRK10887.1"/>
    <property type="match status" value="1"/>
</dbReference>
<dbReference type="PANTHER" id="PTHR42946:SF1">
    <property type="entry name" value="PHOSPHOGLUCOMUTASE (ALPHA-D-GLUCOSE-1,6-BISPHOSPHATE-DEPENDENT)"/>
    <property type="match status" value="1"/>
</dbReference>
<dbReference type="PANTHER" id="PTHR42946">
    <property type="entry name" value="PHOSPHOHEXOSE MUTASE"/>
    <property type="match status" value="1"/>
</dbReference>
<dbReference type="Pfam" id="PF02878">
    <property type="entry name" value="PGM_PMM_I"/>
    <property type="match status" value="1"/>
</dbReference>
<dbReference type="Pfam" id="PF02879">
    <property type="entry name" value="PGM_PMM_II"/>
    <property type="match status" value="1"/>
</dbReference>
<dbReference type="Pfam" id="PF02880">
    <property type="entry name" value="PGM_PMM_III"/>
    <property type="match status" value="1"/>
</dbReference>
<dbReference type="Pfam" id="PF00408">
    <property type="entry name" value="PGM_PMM_IV"/>
    <property type="match status" value="1"/>
</dbReference>
<dbReference type="PRINTS" id="PR00509">
    <property type="entry name" value="PGMPMM"/>
</dbReference>
<dbReference type="SUPFAM" id="SSF55957">
    <property type="entry name" value="Phosphoglucomutase, C-terminal domain"/>
    <property type="match status" value="1"/>
</dbReference>
<dbReference type="SUPFAM" id="SSF53738">
    <property type="entry name" value="Phosphoglucomutase, first 3 domains"/>
    <property type="match status" value="3"/>
</dbReference>
<dbReference type="PROSITE" id="PS00710">
    <property type="entry name" value="PGM_PMM"/>
    <property type="match status" value="1"/>
</dbReference>
<sequence>MKERKYFGTDGVRGLVGEHPINPEFAMKLGWAAGRVLSENGTKKVMIGKDTRISGYMLETALQAGLIAAGIDVVLLGPMPTPAIAYLAQTFRAEAGIVISASHNPYYDNGIKFFNCRGLKLDDKVELEIEAMLDEPMTCVESDKLGKASRLTSADGRYIEFCKSQFPQSLSLEGLKIVLDCANGATYHIAPSVMRELGANIITHACEPNGVNINHECGATHVDTLKRKVLEHNADVGIAYDGDGDRVMMVDHNGRVFDGDDLVYIIACQAAQDDNLGGGVVGTVMSNMGLENALKAKGIEFARSKVGDRYVMELLQQKGWTIGGESSGHVLNLDLISTGDGIISSLQVLAAMVAQNKTLQDLGTGFTKYPMKMINVRYTPGTDPTKAPAVLAAVAEVEQTLGEKGRVLLRKSGTEPVVRVMVEAEQEKLVIDSAEKIAAVVESMSKQTD</sequence>
<organism>
    <name type="scientific">Pseudoalteromonas translucida (strain TAC 125)</name>
    <dbReference type="NCBI Taxonomy" id="326442"/>
    <lineage>
        <taxon>Bacteria</taxon>
        <taxon>Pseudomonadati</taxon>
        <taxon>Pseudomonadota</taxon>
        <taxon>Gammaproteobacteria</taxon>
        <taxon>Alteromonadales</taxon>
        <taxon>Pseudoalteromonadaceae</taxon>
        <taxon>Pseudoalteromonas</taxon>
    </lineage>
</organism>
<keyword id="KW-0413">Isomerase</keyword>
<keyword id="KW-0460">Magnesium</keyword>
<keyword id="KW-0479">Metal-binding</keyword>
<keyword id="KW-0597">Phosphoprotein</keyword>
<keyword id="KW-1185">Reference proteome</keyword>
<reference key="1">
    <citation type="journal article" date="2005" name="Genome Res.">
        <title>Coping with cold: the genome of the versatile marine Antarctica bacterium Pseudoalteromonas haloplanktis TAC125.</title>
        <authorList>
            <person name="Medigue C."/>
            <person name="Krin E."/>
            <person name="Pascal G."/>
            <person name="Barbe V."/>
            <person name="Bernsel A."/>
            <person name="Bertin P.N."/>
            <person name="Cheung F."/>
            <person name="Cruveiller S."/>
            <person name="D'Amico S."/>
            <person name="Duilio A."/>
            <person name="Fang G."/>
            <person name="Feller G."/>
            <person name="Ho C."/>
            <person name="Mangenot S."/>
            <person name="Marino G."/>
            <person name="Nilsson J."/>
            <person name="Parrilli E."/>
            <person name="Rocha E.P.C."/>
            <person name="Rouy Z."/>
            <person name="Sekowska A."/>
            <person name="Tutino M.L."/>
            <person name="Vallenet D."/>
            <person name="von Heijne G."/>
            <person name="Danchin A."/>
        </authorList>
    </citation>
    <scope>NUCLEOTIDE SEQUENCE [LARGE SCALE GENOMIC DNA]</scope>
    <source>
        <strain>TAC 125</strain>
    </source>
</reference>